<comment type="function">
    <text evidence="1">Positive regulation of apoptosis. May facilitate FBN1 microfibril biogenesis (By similarity).</text>
</comment>
<comment type="subunit">
    <text evidence="1">Interacts with CTSB. Interacts with FBN1 (By similarity).</text>
</comment>
<comment type="subcellular location">
    <subcellularLocation>
        <location evidence="1">Secreted</location>
        <location evidence="1">Extracellular space</location>
        <location evidence="1">Extracellular matrix</location>
    </subcellularLocation>
    <text evidence="1">Colocalizes with FMN1 microfibrils in the eye ECM.</text>
</comment>
<comment type="PTM">
    <text evidence="1">Glycosylated (By similarity). Can be O-fucosylated by POFUT2 on a serine or a threonine residue found within the consensus sequence C1-X(2)-(S/T)-C2-G of the TSP type-1 repeat domains where C1 and C2 are the first and second cysteine residue of the repeat, respectively. Fucosylated repeats can then be further glycosylated by the addition of a beta-1,3-glucose residue by the glucosyltransferase, B3GALTL. Fucosylation mediates the efficient secretion of ADAMTS family members. Can also be C-glycosylated with one or two mannose molecules on tryptophan residues within the consensus sequence W-X-X-W of the TPRs, and N-glycosylated. These other glycosylations can also facilitate secretion (By similarity).</text>
</comment>
<comment type="caution">
    <text evidence="6">Although similar to members of the ADAMTS family, it lacks the metalloprotease and disintegrin-like domains which are typical of that family.</text>
</comment>
<organism>
    <name type="scientific">Rattus norvegicus</name>
    <name type="common">Rat</name>
    <dbReference type="NCBI Taxonomy" id="10116"/>
    <lineage>
        <taxon>Eukaryota</taxon>
        <taxon>Metazoa</taxon>
        <taxon>Chordata</taxon>
        <taxon>Craniata</taxon>
        <taxon>Vertebrata</taxon>
        <taxon>Euteleostomi</taxon>
        <taxon>Mammalia</taxon>
        <taxon>Eutheria</taxon>
        <taxon>Euarchontoglires</taxon>
        <taxon>Glires</taxon>
        <taxon>Rodentia</taxon>
        <taxon>Myomorpha</taxon>
        <taxon>Muroidea</taxon>
        <taxon>Muridae</taxon>
        <taxon>Murinae</taxon>
        <taxon>Rattus</taxon>
    </lineage>
</organism>
<sequence length="1030" mass="112785">MELWLGRLWLYVMLLLLLLQLCQDQELLGPSLQTPSEEDQVPEGLWGPWGRWASCSQPCGVGVQRRSRTCELHPALSLPPRPPRHPEAPQPRGQGSRPQTPRDPQSLYRPQPRGRGGPLRGPASQVGREETQEPRGAQRFRVRDPIKPGMFGYGRVPFALPLHRSRRLAHKPGQPKDSSTAEETLPSQPPSTEPASEKHSPHMQPPELRAQSRSPSAETPRSGTAQTEVPSRTSSAPSDMGIPAPTSSFRDSRSFQGSPEPRMPTSQGAERQPHPFSPVTRSQLSRRHWRPPGSPHRSPDGWLPLTRDSSPHWSLFAPSSPTPECSGESEQMRACSQEPCPPEQPDPRALQCAAFDSQEFMGQLYQWEPFTEVQGSQRCELNCRPRGFRFYVRHTEKVQDGTLCQPGSLDICVAGHCLSPGCDGILGSGRRPDGCGVCGGDGSTCRLVSGNLTDRGGPLGYQKILWIPAGASHLRISQFRPSSNYLALRGPGGRSIINGNWAVDPPGSYAAVGTVFQYNRPPREEGKGETLSAEGPTTQPVDVYMIFQEDNPGVFYQYVTSAAPESPSTMPPALQLQPEMLRGEPLLPSAPRPVRAPGTLQRQARIPQVPPPTHVRTAMGSSAGYWKQVGHSECSASCGKGVWRPIFLCVSRESGEELDEQSCAVGARPPASPESCHRPPCPPYWEAGEWTSCSRSCGPGTQHRQLLCRQEFGGGGSSVPPERCGHLPRPNITQSCQLRLCGHWEISSPWSQCSVRCGRGQRSRQVRCVGSNGHEVGKQECASGPPPPPSREACDMGPCTTAWFYSDWSSKCSAECGTGIQRRAVVCLRSGETLQGDPEAGSTEQGCPLRSRPPDMRACSLGPCEKTWRWYTGPWSECSSECGSGTQHRDIICVSKLGTKFNVTSPSNCSHLPRPPALQPCQGQACEDQWFSTLWSPCSQSCQGGVQTREVQCLSSNHTLSSRCPPHLRPSRKRPCNSQPCNQRPDDQCKDSSPHCPLVVQARLCVYPYYTATCCRSCAHVLEQSQLEPA</sequence>
<feature type="signal peptide" evidence="2">
    <location>
        <begin position="1"/>
        <end position="24"/>
    </location>
</feature>
<feature type="chain" id="PRO_0000257968" description="ADAMTS-like protein 4" evidence="2">
    <location>
        <begin position="25"/>
        <end position="1030"/>
    </location>
</feature>
<feature type="domain" description="TSP type-1 1" evidence="3">
    <location>
        <begin position="47"/>
        <end position="91"/>
    </location>
</feature>
<feature type="domain" description="TSP type-1 2" evidence="3">
    <location>
        <begin position="681"/>
        <end position="740"/>
    </location>
</feature>
<feature type="domain" description="TSP type-1 3" evidence="3">
    <location>
        <begin position="741"/>
        <end position="800"/>
    </location>
</feature>
<feature type="domain" description="TSP type-1 4" evidence="3">
    <location>
        <begin position="803"/>
        <end position="865"/>
    </location>
</feature>
<feature type="domain" description="TSP type-1 5" evidence="3">
    <location>
        <begin position="866"/>
        <end position="925"/>
    </location>
</feature>
<feature type="domain" description="TSP type-1 6" evidence="3">
    <location>
        <begin position="926"/>
        <end position="982"/>
    </location>
</feature>
<feature type="domain" description="PLAC" evidence="4">
    <location>
        <begin position="985"/>
        <end position="1022"/>
    </location>
</feature>
<feature type="region of interest" description="Disordered" evidence="5">
    <location>
        <begin position="73"/>
        <end position="150"/>
    </location>
</feature>
<feature type="region of interest" description="Disordered" evidence="5">
    <location>
        <begin position="168"/>
        <end position="306"/>
    </location>
</feature>
<feature type="compositionally biased region" description="Polar residues" evidence="5">
    <location>
        <begin position="176"/>
        <end position="186"/>
    </location>
</feature>
<feature type="compositionally biased region" description="Polar residues" evidence="5">
    <location>
        <begin position="211"/>
        <end position="237"/>
    </location>
</feature>
<feature type="compositionally biased region" description="Polar residues" evidence="5">
    <location>
        <begin position="245"/>
        <end position="257"/>
    </location>
</feature>
<feature type="glycosylation site" description="N-linked (GlcNAc...) asparagine" evidence="2">
    <location>
        <position position="451"/>
    </location>
</feature>
<feature type="glycosylation site" description="N-linked (GlcNAc...) asparagine" evidence="2">
    <location>
        <position position="731"/>
    </location>
</feature>
<gene>
    <name evidence="7" type="primary">Adamtsl4</name>
</gene>
<keyword id="KW-0053">Apoptosis</keyword>
<keyword id="KW-0272">Extracellular matrix</keyword>
<keyword id="KW-0325">Glycoprotein</keyword>
<keyword id="KW-1185">Reference proteome</keyword>
<keyword id="KW-0677">Repeat</keyword>
<keyword id="KW-0964">Secreted</keyword>
<keyword id="KW-0732">Signal</keyword>
<reference evidence="7" key="1">
    <citation type="journal article" date="2004" name="Genome Res.">
        <title>The status, quality, and expansion of the NIH full-length cDNA project: the Mammalian Gene Collection (MGC).</title>
        <authorList>
            <consortium name="The MGC Project Team"/>
        </authorList>
    </citation>
    <scope>NUCLEOTIDE SEQUENCE [LARGE SCALE MRNA]</scope>
    <source>
        <tissue evidence="7">Placenta</tissue>
    </source>
</reference>
<proteinExistence type="evidence at transcript level"/>
<dbReference type="EMBL" id="BC099119">
    <property type="protein sequence ID" value="AAH99119.1"/>
    <property type="molecule type" value="mRNA"/>
</dbReference>
<dbReference type="RefSeq" id="NP_001029184.1">
    <property type="nucleotide sequence ID" value="NM_001034012.1"/>
</dbReference>
<dbReference type="RefSeq" id="XP_008759529.2">
    <property type="nucleotide sequence ID" value="XM_008761307.2"/>
</dbReference>
<dbReference type="RefSeq" id="XP_017446392.1">
    <property type="nucleotide sequence ID" value="XM_017590903.2"/>
</dbReference>
<dbReference type="RefSeq" id="XP_017446393.1">
    <property type="nucleotide sequence ID" value="XM_017590904.1"/>
</dbReference>
<dbReference type="RefSeq" id="XP_017446394.1">
    <property type="nucleotide sequence ID" value="XM_017590905.1"/>
</dbReference>
<dbReference type="RefSeq" id="XP_017446395.1">
    <property type="nucleotide sequence ID" value="XM_017590906.3"/>
</dbReference>
<dbReference type="RefSeq" id="XP_017446396.1">
    <property type="nucleotide sequence ID" value="XM_017590907.3"/>
</dbReference>
<dbReference type="RefSeq" id="XP_063137944.1">
    <property type="nucleotide sequence ID" value="XM_063281874.1"/>
</dbReference>
<dbReference type="RefSeq" id="XP_063137945.1">
    <property type="nucleotide sequence ID" value="XM_063281875.1"/>
</dbReference>
<dbReference type="RefSeq" id="XP_063137946.1">
    <property type="nucleotide sequence ID" value="XM_063281876.1"/>
</dbReference>
<dbReference type="RefSeq" id="XP_063137947.1">
    <property type="nucleotide sequence ID" value="XM_063281877.1"/>
</dbReference>
<dbReference type="RefSeq" id="XP_063137948.1">
    <property type="nucleotide sequence ID" value="XM_063281878.1"/>
</dbReference>
<dbReference type="SMR" id="Q4FZU4"/>
<dbReference type="FunCoup" id="Q4FZU4">
    <property type="interactions" value="406"/>
</dbReference>
<dbReference type="STRING" id="10116.ENSRNOP00000063998"/>
<dbReference type="GlyCosmos" id="Q4FZU4">
    <property type="glycosylation" value="2 sites, No reported glycans"/>
</dbReference>
<dbReference type="GlyGen" id="Q4FZU4">
    <property type="glycosylation" value="5 sites"/>
</dbReference>
<dbReference type="PhosphoSitePlus" id="Q4FZU4"/>
<dbReference type="PaxDb" id="10116-ENSRNOP00000063998"/>
<dbReference type="Ensembl" id="ENSRNOT00000074156.2">
    <property type="protein sequence ID" value="ENSRNOP00000063998.1"/>
    <property type="gene ID" value="ENSRNOG00000049385.2"/>
</dbReference>
<dbReference type="GeneID" id="310670"/>
<dbReference type="KEGG" id="rno:310670"/>
<dbReference type="AGR" id="RGD:1561012"/>
<dbReference type="CTD" id="54507"/>
<dbReference type="RGD" id="1561012">
    <property type="gene designation" value="Adamtsl4"/>
</dbReference>
<dbReference type="eggNOG" id="KOG3538">
    <property type="taxonomic scope" value="Eukaryota"/>
</dbReference>
<dbReference type="eggNOG" id="KOG4597">
    <property type="taxonomic scope" value="Eukaryota"/>
</dbReference>
<dbReference type="GeneTree" id="ENSGT00940000161136"/>
<dbReference type="HOGENOM" id="CLU_000660_6_0_1"/>
<dbReference type="InParanoid" id="Q4FZU4"/>
<dbReference type="OMA" id="SHWEVRT"/>
<dbReference type="OrthoDB" id="10062690at2759"/>
<dbReference type="PhylomeDB" id="Q4FZU4"/>
<dbReference type="Reactome" id="R-RNO-5173214">
    <property type="pathway name" value="O-glycosylation of TSR domain-containing proteins"/>
</dbReference>
<dbReference type="PRO" id="PR:Q4FZU4"/>
<dbReference type="Proteomes" id="UP000002494">
    <property type="component" value="Chromosome 2"/>
</dbReference>
<dbReference type="Bgee" id="ENSRNOG00000049385">
    <property type="expression patterns" value="Expressed in esophagus and 18 other cell types or tissues"/>
</dbReference>
<dbReference type="GO" id="GO:0031012">
    <property type="term" value="C:extracellular matrix"/>
    <property type="evidence" value="ECO:0000266"/>
    <property type="project" value="RGD"/>
</dbReference>
<dbReference type="GO" id="GO:0005576">
    <property type="term" value="C:extracellular region"/>
    <property type="evidence" value="ECO:0007669"/>
    <property type="project" value="UniProtKB-KW"/>
</dbReference>
<dbReference type="GO" id="GO:0005614">
    <property type="term" value="C:interstitial matrix"/>
    <property type="evidence" value="ECO:0000266"/>
    <property type="project" value="RGD"/>
</dbReference>
<dbReference type="GO" id="GO:0002020">
    <property type="term" value="F:protease binding"/>
    <property type="evidence" value="ECO:0000250"/>
    <property type="project" value="UniProtKB"/>
</dbReference>
<dbReference type="GO" id="GO:0006915">
    <property type="term" value="P:apoptotic process"/>
    <property type="evidence" value="ECO:0007669"/>
    <property type="project" value="UniProtKB-KW"/>
</dbReference>
<dbReference type="GO" id="GO:0002064">
    <property type="term" value="P:epithelial cell development"/>
    <property type="evidence" value="ECO:0000266"/>
    <property type="project" value="RGD"/>
</dbReference>
<dbReference type="GO" id="GO:0030198">
    <property type="term" value="P:extracellular matrix organization"/>
    <property type="evidence" value="ECO:0000266"/>
    <property type="project" value="RGD"/>
</dbReference>
<dbReference type="GO" id="GO:0070285">
    <property type="term" value="P:pigment cell development"/>
    <property type="evidence" value="ECO:0000266"/>
    <property type="project" value="RGD"/>
</dbReference>
<dbReference type="GO" id="GO:0043065">
    <property type="term" value="P:positive regulation of apoptotic process"/>
    <property type="evidence" value="ECO:0000250"/>
    <property type="project" value="UniProtKB"/>
</dbReference>
<dbReference type="FunFam" id="2.60.120.830:FF:000001">
    <property type="entry name" value="A disintegrin and metalloproteinase with thrombospondin motifs 1"/>
    <property type="match status" value="1"/>
</dbReference>
<dbReference type="FunFam" id="2.20.100.10:FF:000005">
    <property type="entry name" value="ADAM metallopeptidase with thrombospondin type 1 motif 9"/>
    <property type="match status" value="1"/>
</dbReference>
<dbReference type="FunFam" id="2.20.100.10:FF:000039">
    <property type="entry name" value="thrombospondin type-1 domain-containing protein 4"/>
    <property type="match status" value="1"/>
</dbReference>
<dbReference type="Gene3D" id="2.60.120.830">
    <property type="match status" value="1"/>
</dbReference>
<dbReference type="Gene3D" id="2.20.100.10">
    <property type="entry name" value="Thrombospondin type-1 (TSP1) repeat"/>
    <property type="match status" value="6"/>
</dbReference>
<dbReference type="InterPro" id="IPR050439">
    <property type="entry name" value="ADAMTS_ADAMTS-like"/>
</dbReference>
<dbReference type="InterPro" id="IPR045371">
    <property type="entry name" value="ADAMTS_CR_3"/>
</dbReference>
<dbReference type="InterPro" id="IPR010294">
    <property type="entry name" value="ADAMTS_spacer1"/>
</dbReference>
<dbReference type="InterPro" id="IPR010909">
    <property type="entry name" value="PLAC"/>
</dbReference>
<dbReference type="InterPro" id="IPR000884">
    <property type="entry name" value="TSP1_rpt"/>
</dbReference>
<dbReference type="InterPro" id="IPR036383">
    <property type="entry name" value="TSP1_rpt_sf"/>
</dbReference>
<dbReference type="PANTHER" id="PTHR13723">
    <property type="entry name" value="ADAMTS A DISINTEGRIN AND METALLOPROTEASE WITH THROMBOSPONDIN MOTIFS PROTEASE"/>
    <property type="match status" value="1"/>
</dbReference>
<dbReference type="PANTHER" id="PTHR13723:SF144">
    <property type="entry name" value="ADAMTS-LIKE PROTEIN 4"/>
    <property type="match status" value="1"/>
</dbReference>
<dbReference type="Pfam" id="PF19236">
    <property type="entry name" value="ADAMTS_CR_3"/>
    <property type="match status" value="1"/>
</dbReference>
<dbReference type="Pfam" id="PF05986">
    <property type="entry name" value="ADAMTS_spacer1"/>
    <property type="match status" value="1"/>
</dbReference>
<dbReference type="Pfam" id="PF08686">
    <property type="entry name" value="PLAC"/>
    <property type="match status" value="1"/>
</dbReference>
<dbReference type="Pfam" id="PF19030">
    <property type="entry name" value="TSP1_ADAMTS"/>
    <property type="match status" value="6"/>
</dbReference>
<dbReference type="Pfam" id="PF00090">
    <property type="entry name" value="TSP_1"/>
    <property type="match status" value="1"/>
</dbReference>
<dbReference type="SMART" id="SM00209">
    <property type="entry name" value="TSP1"/>
    <property type="match status" value="7"/>
</dbReference>
<dbReference type="SUPFAM" id="SSF82895">
    <property type="entry name" value="TSP-1 type 1 repeat"/>
    <property type="match status" value="6"/>
</dbReference>
<dbReference type="PROSITE" id="PS50900">
    <property type="entry name" value="PLAC"/>
    <property type="match status" value="1"/>
</dbReference>
<dbReference type="PROSITE" id="PS50092">
    <property type="entry name" value="TSP1"/>
    <property type="match status" value="6"/>
</dbReference>
<accession>Q4FZU4</accession>
<name>ATL4_RAT</name>
<evidence type="ECO:0000250" key="1"/>
<evidence type="ECO:0000255" key="2"/>
<evidence type="ECO:0000255" key="3">
    <source>
        <dbReference type="PROSITE-ProRule" id="PRU00210"/>
    </source>
</evidence>
<evidence type="ECO:0000255" key="4">
    <source>
        <dbReference type="PROSITE-ProRule" id="PRU00233"/>
    </source>
</evidence>
<evidence type="ECO:0000256" key="5">
    <source>
        <dbReference type="SAM" id="MobiDB-lite"/>
    </source>
</evidence>
<evidence type="ECO:0000305" key="6"/>
<evidence type="ECO:0000312" key="7">
    <source>
        <dbReference type="EMBL" id="AAH99119.1"/>
    </source>
</evidence>
<protein>
    <recommendedName>
        <fullName>ADAMTS-like protein 4</fullName>
        <shortName>ADAMTSL-4</shortName>
    </recommendedName>
</protein>